<gene>
    <name evidence="1" type="primary">truD</name>
    <name type="ordered locus">SF2768</name>
    <name type="ordered locus">S2961</name>
</gene>
<evidence type="ECO:0000255" key="1">
    <source>
        <dbReference type="HAMAP-Rule" id="MF_01082"/>
    </source>
</evidence>
<feature type="chain" id="PRO_0000152522" description="tRNA pseudouridine synthase D">
    <location>
        <begin position="1"/>
        <end position="349"/>
    </location>
</feature>
<feature type="domain" description="TRUD" evidence="1">
    <location>
        <begin position="155"/>
        <end position="303"/>
    </location>
</feature>
<feature type="active site" description="Nucleophile" evidence="1">
    <location>
        <position position="80"/>
    </location>
</feature>
<feature type="binding site" evidence="1">
    <location>
        <position position="27"/>
    </location>
    <ligand>
        <name>substrate</name>
    </ligand>
</feature>
<feature type="binding site" evidence="1">
    <location>
        <position position="129"/>
    </location>
    <ligand>
        <name>substrate</name>
    </ligand>
</feature>
<feature type="binding site" evidence="1">
    <location>
        <position position="329"/>
    </location>
    <ligand>
        <name>substrate</name>
    </ligand>
</feature>
<organism>
    <name type="scientific">Shigella flexneri</name>
    <dbReference type="NCBI Taxonomy" id="623"/>
    <lineage>
        <taxon>Bacteria</taxon>
        <taxon>Pseudomonadati</taxon>
        <taxon>Pseudomonadota</taxon>
        <taxon>Gammaproteobacteria</taxon>
        <taxon>Enterobacterales</taxon>
        <taxon>Enterobacteriaceae</taxon>
        <taxon>Shigella</taxon>
    </lineage>
</organism>
<sequence>MIEFDNLTYLHGKPQGTGLLKANPEDFVVVEDLGFEPDGEGEHILVRILKNGCNTRFVADALAKFLKIHSREVSFAGQKDKHAVTEQWLCARVPGKEMPDLSAFQLEGCQVLEYARHKRKLRLGALKGNAFTLVLREVSNRDDVEQRLIDICVKGVPNYFGAQRFGIGGSNLQGALRWAQTNTPVRDRNKRSFWLSAARSALFNQIVAERLKKADVNQVVDGDALQLAGRGSWFVATTEELAELQRRVNDKELMITAALPGSGEWGTQREALAFEQAAVAAETELQALLVREKVEAARRAMLLYPQQLSWNWWDDVTVEIRFWLPAGSFATSVVRELINTTGDYAHIAE</sequence>
<proteinExistence type="inferred from homology"/>
<reference key="1">
    <citation type="journal article" date="2002" name="Nucleic Acids Res.">
        <title>Genome sequence of Shigella flexneri 2a: insights into pathogenicity through comparison with genomes of Escherichia coli K12 and O157.</title>
        <authorList>
            <person name="Jin Q."/>
            <person name="Yuan Z."/>
            <person name="Xu J."/>
            <person name="Wang Y."/>
            <person name="Shen Y."/>
            <person name="Lu W."/>
            <person name="Wang J."/>
            <person name="Liu H."/>
            <person name="Yang J."/>
            <person name="Yang F."/>
            <person name="Zhang X."/>
            <person name="Zhang J."/>
            <person name="Yang G."/>
            <person name="Wu H."/>
            <person name="Qu D."/>
            <person name="Dong J."/>
            <person name="Sun L."/>
            <person name="Xue Y."/>
            <person name="Zhao A."/>
            <person name="Gao Y."/>
            <person name="Zhu J."/>
            <person name="Kan B."/>
            <person name="Ding K."/>
            <person name="Chen S."/>
            <person name="Cheng H."/>
            <person name="Yao Z."/>
            <person name="He B."/>
            <person name="Chen R."/>
            <person name="Ma D."/>
            <person name="Qiang B."/>
            <person name="Wen Y."/>
            <person name="Hou Y."/>
            <person name="Yu J."/>
        </authorList>
    </citation>
    <scope>NUCLEOTIDE SEQUENCE [LARGE SCALE GENOMIC DNA]</scope>
    <source>
        <strain>301 / Serotype 2a</strain>
    </source>
</reference>
<reference key="2">
    <citation type="journal article" date="2003" name="Infect. Immun.">
        <title>Complete genome sequence and comparative genomics of Shigella flexneri serotype 2a strain 2457T.</title>
        <authorList>
            <person name="Wei J."/>
            <person name="Goldberg M.B."/>
            <person name="Burland V."/>
            <person name="Venkatesan M.M."/>
            <person name="Deng W."/>
            <person name="Fournier G."/>
            <person name="Mayhew G.F."/>
            <person name="Plunkett G. III"/>
            <person name="Rose D.J."/>
            <person name="Darling A."/>
            <person name="Mau B."/>
            <person name="Perna N.T."/>
            <person name="Payne S.M."/>
            <person name="Runyen-Janecky L.J."/>
            <person name="Zhou S."/>
            <person name="Schwartz D.C."/>
            <person name="Blattner F.R."/>
        </authorList>
    </citation>
    <scope>NUCLEOTIDE SEQUENCE [LARGE SCALE GENOMIC DNA]</scope>
    <source>
        <strain>ATCC 700930 / 2457T / Serotype 2a</strain>
    </source>
</reference>
<protein>
    <recommendedName>
        <fullName evidence="1">tRNA pseudouridine synthase D</fullName>
        <ecNumber evidence="1">5.4.99.27</ecNumber>
    </recommendedName>
    <alternativeName>
        <fullName evidence="1">tRNA pseudouridine(13) synthase</fullName>
    </alternativeName>
    <alternativeName>
        <fullName evidence="1">tRNA pseudouridylate synthase D</fullName>
    </alternativeName>
    <alternativeName>
        <fullName evidence="1">tRNA-uridine isomerase D</fullName>
    </alternativeName>
</protein>
<accession>Q83QE3</accession>
<name>TRUD_SHIFL</name>
<comment type="function">
    <text evidence="1">Responsible for synthesis of pseudouridine from uracil-13 in transfer RNAs.</text>
</comment>
<comment type="catalytic activity">
    <reaction evidence="1">
        <text>uridine(13) in tRNA = pseudouridine(13) in tRNA</text>
        <dbReference type="Rhea" id="RHEA:42540"/>
        <dbReference type="Rhea" id="RHEA-COMP:10105"/>
        <dbReference type="Rhea" id="RHEA-COMP:10106"/>
        <dbReference type="ChEBI" id="CHEBI:65314"/>
        <dbReference type="ChEBI" id="CHEBI:65315"/>
        <dbReference type="EC" id="5.4.99.27"/>
    </reaction>
</comment>
<comment type="similarity">
    <text evidence="1">Belongs to the pseudouridine synthase TruD family.</text>
</comment>
<keyword id="KW-0413">Isomerase</keyword>
<keyword id="KW-1185">Reference proteome</keyword>
<keyword id="KW-0819">tRNA processing</keyword>
<dbReference type="EC" id="5.4.99.27" evidence="1"/>
<dbReference type="EMBL" id="AE005674">
    <property type="protein sequence ID" value="AAN44257.1"/>
    <property type="molecule type" value="Genomic_DNA"/>
</dbReference>
<dbReference type="EMBL" id="AE014073">
    <property type="protein sequence ID" value="AAP18083.1"/>
    <property type="molecule type" value="Genomic_DNA"/>
</dbReference>
<dbReference type="RefSeq" id="NP_708550.1">
    <property type="nucleotide sequence ID" value="NC_004337.2"/>
</dbReference>
<dbReference type="RefSeq" id="WP_000568962.1">
    <property type="nucleotide sequence ID" value="NZ_WPGW01000039.1"/>
</dbReference>
<dbReference type="SMR" id="Q83QE3"/>
<dbReference type="STRING" id="198214.SF2768"/>
<dbReference type="PaxDb" id="198214-SF2768"/>
<dbReference type="GeneID" id="1027447"/>
<dbReference type="KEGG" id="sfl:SF2768"/>
<dbReference type="KEGG" id="sfx:S2961"/>
<dbReference type="PATRIC" id="fig|198214.7.peg.3295"/>
<dbReference type="HOGENOM" id="CLU_005281_4_0_6"/>
<dbReference type="Proteomes" id="UP000001006">
    <property type="component" value="Chromosome"/>
</dbReference>
<dbReference type="Proteomes" id="UP000002673">
    <property type="component" value="Chromosome"/>
</dbReference>
<dbReference type="GO" id="GO:0005829">
    <property type="term" value="C:cytosol"/>
    <property type="evidence" value="ECO:0007669"/>
    <property type="project" value="TreeGrafter"/>
</dbReference>
<dbReference type="GO" id="GO:0003723">
    <property type="term" value="F:RNA binding"/>
    <property type="evidence" value="ECO:0007669"/>
    <property type="project" value="InterPro"/>
</dbReference>
<dbReference type="GO" id="GO:0160150">
    <property type="term" value="F:tRNA pseudouridine(13) synthase activity"/>
    <property type="evidence" value="ECO:0007669"/>
    <property type="project" value="UniProtKB-EC"/>
</dbReference>
<dbReference type="GO" id="GO:0031119">
    <property type="term" value="P:tRNA pseudouridine synthesis"/>
    <property type="evidence" value="ECO:0007669"/>
    <property type="project" value="UniProtKB-UniRule"/>
</dbReference>
<dbReference type="CDD" id="cd02575">
    <property type="entry name" value="PseudoU_synth_EcTruD"/>
    <property type="match status" value="1"/>
</dbReference>
<dbReference type="FunFam" id="3.30.2340.10:FF:000001">
    <property type="entry name" value="tRNA pseudouridine synthase D"/>
    <property type="match status" value="1"/>
</dbReference>
<dbReference type="FunFam" id="3.30.2350.20:FF:000001">
    <property type="entry name" value="tRNA pseudouridine synthase D"/>
    <property type="match status" value="1"/>
</dbReference>
<dbReference type="Gene3D" id="3.30.2350.20">
    <property type="entry name" value="TruD, catalytic domain"/>
    <property type="match status" value="1"/>
</dbReference>
<dbReference type="Gene3D" id="3.30.2340.10">
    <property type="entry name" value="TruD, insertion domain"/>
    <property type="match status" value="1"/>
</dbReference>
<dbReference type="HAMAP" id="MF_01082">
    <property type="entry name" value="TruD"/>
    <property type="match status" value="1"/>
</dbReference>
<dbReference type="InterPro" id="IPR020103">
    <property type="entry name" value="PsdUridine_synth_cat_dom_sf"/>
</dbReference>
<dbReference type="InterPro" id="IPR001656">
    <property type="entry name" value="PsdUridine_synth_TruD"/>
</dbReference>
<dbReference type="InterPro" id="IPR020119">
    <property type="entry name" value="PsdUridine_synth_TruD_CS"/>
</dbReference>
<dbReference type="InterPro" id="IPR011760">
    <property type="entry name" value="PsdUridine_synth_TruD_insert"/>
</dbReference>
<dbReference type="InterPro" id="IPR042214">
    <property type="entry name" value="TruD_catalytic"/>
</dbReference>
<dbReference type="InterPro" id="IPR043165">
    <property type="entry name" value="TruD_insert_sf"/>
</dbReference>
<dbReference type="InterPro" id="IPR050170">
    <property type="entry name" value="TruD_pseudoU_synthase"/>
</dbReference>
<dbReference type="NCBIfam" id="NF002155">
    <property type="entry name" value="PRK00984.1-4"/>
    <property type="match status" value="1"/>
</dbReference>
<dbReference type="NCBIfam" id="TIGR00094">
    <property type="entry name" value="tRNA_TruD_broad"/>
    <property type="match status" value="1"/>
</dbReference>
<dbReference type="PANTHER" id="PTHR47811">
    <property type="entry name" value="TRNA PSEUDOURIDINE SYNTHASE D"/>
    <property type="match status" value="1"/>
</dbReference>
<dbReference type="PANTHER" id="PTHR47811:SF1">
    <property type="entry name" value="TRNA PSEUDOURIDINE SYNTHASE D"/>
    <property type="match status" value="1"/>
</dbReference>
<dbReference type="Pfam" id="PF01142">
    <property type="entry name" value="TruD"/>
    <property type="match status" value="2"/>
</dbReference>
<dbReference type="SUPFAM" id="SSF55120">
    <property type="entry name" value="Pseudouridine synthase"/>
    <property type="match status" value="1"/>
</dbReference>
<dbReference type="PROSITE" id="PS50984">
    <property type="entry name" value="TRUD"/>
    <property type="match status" value="1"/>
</dbReference>
<dbReference type="PROSITE" id="PS01268">
    <property type="entry name" value="UPF0024"/>
    <property type="match status" value="1"/>
</dbReference>